<evidence type="ECO:0000250" key="1"/>
<evidence type="ECO:0000305" key="2"/>
<protein>
    <recommendedName>
        <fullName>Endoribonuclease YbeY</fullName>
        <ecNumber>3.1.-.-</ecNumber>
    </recommendedName>
</protein>
<reference key="1">
    <citation type="journal article" date="2006" name="Nat. Biotechnol.">
        <title>Complete genome of the mutualistic, N2-fixing grass endophyte Azoarcus sp. strain BH72.</title>
        <authorList>
            <person name="Krause A."/>
            <person name="Ramakumar A."/>
            <person name="Bartels D."/>
            <person name="Battistoni F."/>
            <person name="Bekel T."/>
            <person name="Boch J."/>
            <person name="Boehm M."/>
            <person name="Friedrich F."/>
            <person name="Hurek T."/>
            <person name="Krause L."/>
            <person name="Linke B."/>
            <person name="McHardy A.C."/>
            <person name="Sarkar A."/>
            <person name="Schneiker S."/>
            <person name="Syed A.A."/>
            <person name="Thauer R."/>
            <person name="Vorhoelter F.-J."/>
            <person name="Weidner S."/>
            <person name="Puehler A."/>
            <person name="Reinhold-Hurek B."/>
            <person name="Kaiser O."/>
            <person name="Goesmann A."/>
        </authorList>
    </citation>
    <scope>NUCLEOTIDE SEQUENCE [LARGE SCALE GENOMIC DNA]</scope>
    <source>
        <strain>BH72</strain>
    </source>
</reference>
<dbReference type="EC" id="3.1.-.-"/>
<dbReference type="EMBL" id="AM406670">
    <property type="protein sequence ID" value="CAL93397.1"/>
    <property type="molecule type" value="Genomic_DNA"/>
</dbReference>
<dbReference type="RefSeq" id="WP_041643281.1">
    <property type="nucleotide sequence ID" value="NC_008702.1"/>
</dbReference>
<dbReference type="SMR" id="A1K3J2"/>
<dbReference type="STRING" id="62928.azo0780"/>
<dbReference type="KEGG" id="azo:azo0780"/>
<dbReference type="eggNOG" id="COG0319">
    <property type="taxonomic scope" value="Bacteria"/>
</dbReference>
<dbReference type="HOGENOM" id="CLU_1118710_0_0_4"/>
<dbReference type="Proteomes" id="UP000002588">
    <property type="component" value="Chromosome"/>
</dbReference>
<dbReference type="GO" id="GO:0005737">
    <property type="term" value="C:cytoplasm"/>
    <property type="evidence" value="ECO:0007669"/>
    <property type="project" value="UniProtKB-SubCell"/>
</dbReference>
<dbReference type="GO" id="GO:0004222">
    <property type="term" value="F:metalloendopeptidase activity"/>
    <property type="evidence" value="ECO:0007669"/>
    <property type="project" value="InterPro"/>
</dbReference>
<dbReference type="GO" id="GO:0004521">
    <property type="term" value="F:RNA endonuclease activity"/>
    <property type="evidence" value="ECO:0007669"/>
    <property type="project" value="UniProtKB-UniRule"/>
</dbReference>
<dbReference type="GO" id="GO:0008270">
    <property type="term" value="F:zinc ion binding"/>
    <property type="evidence" value="ECO:0007669"/>
    <property type="project" value="UniProtKB-UniRule"/>
</dbReference>
<dbReference type="GO" id="GO:0006364">
    <property type="term" value="P:rRNA processing"/>
    <property type="evidence" value="ECO:0007669"/>
    <property type="project" value="UniProtKB-UniRule"/>
</dbReference>
<dbReference type="Gene3D" id="3.40.390.30">
    <property type="entry name" value="Metalloproteases ('zincins'), catalytic domain"/>
    <property type="match status" value="1"/>
</dbReference>
<dbReference type="HAMAP" id="MF_00009">
    <property type="entry name" value="Endoribonucl_YbeY"/>
    <property type="match status" value="1"/>
</dbReference>
<dbReference type="InterPro" id="IPR023091">
    <property type="entry name" value="MetalPrtase_cat_dom_sf_prd"/>
</dbReference>
<dbReference type="InterPro" id="IPR002036">
    <property type="entry name" value="YbeY"/>
</dbReference>
<dbReference type="NCBIfam" id="NF010570">
    <property type="entry name" value="PRK13963.1"/>
    <property type="match status" value="1"/>
</dbReference>
<dbReference type="NCBIfam" id="TIGR00043">
    <property type="entry name" value="rRNA maturation RNase YbeY"/>
    <property type="match status" value="1"/>
</dbReference>
<dbReference type="PANTHER" id="PTHR46986">
    <property type="entry name" value="ENDORIBONUCLEASE YBEY, CHLOROPLASTIC"/>
    <property type="match status" value="1"/>
</dbReference>
<dbReference type="PANTHER" id="PTHR46986:SF1">
    <property type="entry name" value="ENDORIBONUCLEASE YBEY, CHLOROPLASTIC"/>
    <property type="match status" value="1"/>
</dbReference>
<dbReference type="Pfam" id="PF02130">
    <property type="entry name" value="YbeY"/>
    <property type="match status" value="1"/>
</dbReference>
<dbReference type="SUPFAM" id="SSF55486">
    <property type="entry name" value="Metalloproteases ('zincins'), catalytic domain"/>
    <property type="match status" value="1"/>
</dbReference>
<organism>
    <name type="scientific">Azoarcus sp. (strain BH72)</name>
    <dbReference type="NCBI Taxonomy" id="418699"/>
    <lineage>
        <taxon>Bacteria</taxon>
        <taxon>Pseudomonadati</taxon>
        <taxon>Pseudomonadota</taxon>
        <taxon>Betaproteobacteria</taxon>
        <taxon>Rhodocyclales</taxon>
        <taxon>Zoogloeaceae</taxon>
        <taxon>Azoarcus</taxon>
    </lineage>
</organism>
<keyword id="KW-0963">Cytoplasm</keyword>
<keyword id="KW-0255">Endonuclease</keyword>
<keyword id="KW-0378">Hydrolase</keyword>
<keyword id="KW-0479">Metal-binding</keyword>
<keyword id="KW-0540">Nuclease</keyword>
<keyword id="KW-1185">Reference proteome</keyword>
<keyword id="KW-0690">Ribosome biogenesis</keyword>
<keyword id="KW-0698">rRNA processing</keyword>
<keyword id="KW-0862">Zinc</keyword>
<name>YBEY_AZOSB</name>
<accession>A1K3J2</accession>
<comment type="function">
    <text evidence="1">Single strand-specific metallo-endoribonuclease involved in late-stage 70S ribosome quality control and in maturation of the 3' terminus of the 16S rRNA.</text>
</comment>
<comment type="cofactor">
    <cofactor evidence="1">
        <name>Zn(2+)</name>
        <dbReference type="ChEBI" id="CHEBI:29105"/>
    </cofactor>
    <text evidence="1">Binds 1 zinc ion.</text>
</comment>
<comment type="subcellular location">
    <subcellularLocation>
        <location evidence="1">Cytoplasm</location>
    </subcellularLocation>
</comment>
<comment type="similarity">
    <text evidence="2">Belongs to the endoribonuclease YbeY family.</text>
</comment>
<proteinExistence type="inferred from homology"/>
<feature type="chain" id="PRO_0000284160" description="Endoribonuclease YbeY">
    <location>
        <begin position="1"/>
        <end position="252"/>
    </location>
</feature>
<feature type="region of interest" description="Unknown">
    <location>
        <begin position="1"/>
        <end position="90"/>
    </location>
</feature>
<feature type="region of interest" description="Endoribonuclease YbeY">
    <location>
        <begin position="91"/>
        <end position="252"/>
    </location>
</feature>
<feature type="binding site" evidence="1">
    <location>
        <position position="215"/>
    </location>
    <ligand>
        <name>Zn(2+)</name>
        <dbReference type="ChEBI" id="CHEBI:29105"/>
        <note>catalytic</note>
    </ligand>
</feature>
<feature type="binding site" evidence="1">
    <location>
        <position position="219"/>
    </location>
    <ligand>
        <name>Zn(2+)</name>
        <dbReference type="ChEBI" id="CHEBI:29105"/>
        <note>catalytic</note>
    </ligand>
</feature>
<feature type="binding site" evidence="1">
    <location>
        <position position="225"/>
    </location>
    <ligand>
        <name>Zn(2+)</name>
        <dbReference type="ChEBI" id="CHEBI:29105"/>
        <note>catalytic</note>
    </ligand>
</feature>
<sequence length="252" mass="26923">MPKQADGVRIVAVDAAGKTSRIKAERLEIDYGDGRRLTLTLPNDGWAHLDIEADVAGDDDGDLPVITIQPSACNAVALRVEVVQQPQVADIDLPVAAKLPVLTLEVQKALDGGDKAAAPKKHQIRRWAQAALRTDAEVTVRLVGETEGRALNLGYRGKDYATNVLTFVYGEEGGAPAVEGMPLMGDLVLCVPVVVREAAEQGKALDAHFAHLVVHGMLHLQGLDHEDDAEAEAMETAETNILRGLGYANPYA</sequence>
<gene>
    <name type="primary">ybeY</name>
    <name type="ordered locus">azo0780</name>
</gene>